<comment type="function">
    <text evidence="1">Catalyzes the isomerization between 2-isopropylmalate and 3-isopropylmalate, via the formation of 2-isopropylmaleate.</text>
</comment>
<comment type="catalytic activity">
    <reaction evidence="1">
        <text>(2R,3S)-3-isopropylmalate = (2S)-2-isopropylmalate</text>
        <dbReference type="Rhea" id="RHEA:32287"/>
        <dbReference type="ChEBI" id="CHEBI:1178"/>
        <dbReference type="ChEBI" id="CHEBI:35121"/>
        <dbReference type="EC" id="4.2.1.33"/>
    </reaction>
</comment>
<comment type="cofactor">
    <cofactor evidence="1">
        <name>[4Fe-4S] cluster</name>
        <dbReference type="ChEBI" id="CHEBI:49883"/>
    </cofactor>
    <text evidence="1">Binds 1 [4Fe-4S] cluster per subunit.</text>
</comment>
<comment type="pathway">
    <text evidence="1">Amino-acid biosynthesis; L-leucine biosynthesis; L-leucine from 3-methyl-2-oxobutanoate: step 2/4.</text>
</comment>
<comment type="subunit">
    <text evidence="1">Heterodimer of LeuC and LeuD.</text>
</comment>
<comment type="similarity">
    <text evidence="1">Belongs to the aconitase/IPM isomerase family. LeuC type 1 subfamily.</text>
</comment>
<evidence type="ECO:0000255" key="1">
    <source>
        <dbReference type="HAMAP-Rule" id="MF_01026"/>
    </source>
</evidence>
<dbReference type="EC" id="4.2.1.33" evidence="1"/>
<dbReference type="EMBL" id="CP000552">
    <property type="protein sequence ID" value="ABM71498.1"/>
    <property type="molecule type" value="Genomic_DNA"/>
</dbReference>
<dbReference type="RefSeq" id="WP_011819608.1">
    <property type="nucleotide sequence ID" value="NC_008817.1"/>
</dbReference>
<dbReference type="SMR" id="A2BUN7"/>
<dbReference type="STRING" id="167542.P9515_02891"/>
<dbReference type="GeneID" id="60200520"/>
<dbReference type="KEGG" id="pmc:P9515_02891"/>
<dbReference type="eggNOG" id="COG0065">
    <property type="taxonomic scope" value="Bacteria"/>
</dbReference>
<dbReference type="HOGENOM" id="CLU_006714_3_4_3"/>
<dbReference type="OrthoDB" id="9802769at2"/>
<dbReference type="UniPathway" id="UPA00048">
    <property type="reaction ID" value="UER00071"/>
</dbReference>
<dbReference type="Proteomes" id="UP000001589">
    <property type="component" value="Chromosome"/>
</dbReference>
<dbReference type="GO" id="GO:0003861">
    <property type="term" value="F:3-isopropylmalate dehydratase activity"/>
    <property type="evidence" value="ECO:0007669"/>
    <property type="project" value="UniProtKB-UniRule"/>
</dbReference>
<dbReference type="GO" id="GO:0051539">
    <property type="term" value="F:4 iron, 4 sulfur cluster binding"/>
    <property type="evidence" value="ECO:0007669"/>
    <property type="project" value="UniProtKB-KW"/>
</dbReference>
<dbReference type="GO" id="GO:0046872">
    <property type="term" value="F:metal ion binding"/>
    <property type="evidence" value="ECO:0007669"/>
    <property type="project" value="UniProtKB-KW"/>
</dbReference>
<dbReference type="GO" id="GO:0009098">
    <property type="term" value="P:L-leucine biosynthetic process"/>
    <property type="evidence" value="ECO:0007669"/>
    <property type="project" value="UniProtKB-UniRule"/>
</dbReference>
<dbReference type="CDD" id="cd01583">
    <property type="entry name" value="IPMI"/>
    <property type="match status" value="1"/>
</dbReference>
<dbReference type="Gene3D" id="3.30.499.10">
    <property type="entry name" value="Aconitase, domain 3"/>
    <property type="match status" value="2"/>
</dbReference>
<dbReference type="HAMAP" id="MF_01026">
    <property type="entry name" value="LeuC_type1"/>
    <property type="match status" value="1"/>
</dbReference>
<dbReference type="InterPro" id="IPR004430">
    <property type="entry name" value="3-IsopropMal_deHydase_lsu"/>
</dbReference>
<dbReference type="InterPro" id="IPR015931">
    <property type="entry name" value="Acnase/IPM_dHydase_lsu_aba_1/3"/>
</dbReference>
<dbReference type="InterPro" id="IPR001030">
    <property type="entry name" value="Acoase/IPM_deHydtase_lsu_aba"/>
</dbReference>
<dbReference type="InterPro" id="IPR018136">
    <property type="entry name" value="Aconitase_4Fe-4S_BS"/>
</dbReference>
<dbReference type="InterPro" id="IPR036008">
    <property type="entry name" value="Aconitase_4Fe-4S_dom"/>
</dbReference>
<dbReference type="InterPro" id="IPR050067">
    <property type="entry name" value="IPM_dehydratase_rel_enz"/>
</dbReference>
<dbReference type="InterPro" id="IPR033941">
    <property type="entry name" value="IPMI_cat"/>
</dbReference>
<dbReference type="NCBIfam" id="TIGR00170">
    <property type="entry name" value="leuC"/>
    <property type="match status" value="1"/>
</dbReference>
<dbReference type="NCBIfam" id="NF004016">
    <property type="entry name" value="PRK05478.1"/>
    <property type="match status" value="1"/>
</dbReference>
<dbReference type="NCBIfam" id="NF009116">
    <property type="entry name" value="PRK12466.1"/>
    <property type="match status" value="1"/>
</dbReference>
<dbReference type="PANTHER" id="PTHR43822:SF9">
    <property type="entry name" value="3-ISOPROPYLMALATE DEHYDRATASE"/>
    <property type="match status" value="1"/>
</dbReference>
<dbReference type="PANTHER" id="PTHR43822">
    <property type="entry name" value="HOMOACONITASE, MITOCHONDRIAL-RELATED"/>
    <property type="match status" value="1"/>
</dbReference>
<dbReference type="Pfam" id="PF00330">
    <property type="entry name" value="Aconitase"/>
    <property type="match status" value="1"/>
</dbReference>
<dbReference type="PRINTS" id="PR00415">
    <property type="entry name" value="ACONITASE"/>
</dbReference>
<dbReference type="SUPFAM" id="SSF53732">
    <property type="entry name" value="Aconitase iron-sulfur domain"/>
    <property type="match status" value="1"/>
</dbReference>
<dbReference type="PROSITE" id="PS00450">
    <property type="entry name" value="ACONITASE_1"/>
    <property type="match status" value="1"/>
</dbReference>
<dbReference type="PROSITE" id="PS01244">
    <property type="entry name" value="ACONITASE_2"/>
    <property type="match status" value="1"/>
</dbReference>
<reference key="1">
    <citation type="journal article" date="2007" name="PLoS Genet.">
        <title>Patterns and implications of gene gain and loss in the evolution of Prochlorococcus.</title>
        <authorList>
            <person name="Kettler G.C."/>
            <person name="Martiny A.C."/>
            <person name="Huang K."/>
            <person name="Zucker J."/>
            <person name="Coleman M.L."/>
            <person name="Rodrigue S."/>
            <person name="Chen F."/>
            <person name="Lapidus A."/>
            <person name="Ferriera S."/>
            <person name="Johnson J."/>
            <person name="Steglich C."/>
            <person name="Church G.M."/>
            <person name="Richardson P."/>
            <person name="Chisholm S.W."/>
        </authorList>
    </citation>
    <scope>NUCLEOTIDE SEQUENCE [LARGE SCALE GENOMIC DNA]</scope>
    <source>
        <strain>MIT 9515</strain>
    </source>
</reference>
<accession>A2BUN7</accession>
<sequence length="469" mass="51342">MSQDTLFDKVWELHKVANLPGGSDQIFIGLHLIHEVTSPQAFGALKDKNLKVKFPNRTVATVDHIVPTDNQNRPFRDNLAEQMIDTLEKNCFEHKIKFFNIGSGKQGIVHVVAPELGLTQPGMTIACGDSHTSTHGAFGSIAFGIGTSQVRDVLASQTIAMNKLKVRQIWCENKLSNGIYAKDLVLHIINHLGVKAGVGYAYEFAGPAISALSMEERMTICNMSIEGGARCGYINPDEKTFSYIKDKLCSPQNENWDKAIKWWKSLQSNENSIFDDVIKIDASRVEPTVTWGITPGQSIGISQKIPSLGEIHPNDQFIAGEAYEYMGFKPGQPIKDTPIDVCFIGSCTNGRISDLRVAARVLGNHKIAKNIKAFVVPGSERVAKEAKEEGLDKVFIDAGFQWREPGCSMCLAMNSDKLIGNQVSASSSNRNFKGRQGSPSGRTLLMSPAMVAAAAIKGKVSDVRDFLNK</sequence>
<protein>
    <recommendedName>
        <fullName evidence="1">3-isopropylmalate dehydratase large subunit</fullName>
        <ecNumber evidence="1">4.2.1.33</ecNumber>
    </recommendedName>
    <alternativeName>
        <fullName evidence="1">Alpha-IPM isomerase</fullName>
        <shortName evidence="1">IPMI</shortName>
    </alternativeName>
    <alternativeName>
        <fullName evidence="1">Isopropylmalate isomerase</fullName>
    </alternativeName>
</protein>
<gene>
    <name evidence="1" type="primary">leuC</name>
    <name type="ordered locus">P9515_02891</name>
</gene>
<organism>
    <name type="scientific">Prochlorococcus marinus (strain MIT 9515)</name>
    <dbReference type="NCBI Taxonomy" id="167542"/>
    <lineage>
        <taxon>Bacteria</taxon>
        <taxon>Bacillati</taxon>
        <taxon>Cyanobacteriota</taxon>
        <taxon>Cyanophyceae</taxon>
        <taxon>Synechococcales</taxon>
        <taxon>Prochlorococcaceae</taxon>
        <taxon>Prochlorococcus</taxon>
    </lineage>
</organism>
<name>LEUC_PROM5</name>
<feature type="chain" id="PRO_1000063586" description="3-isopropylmalate dehydratase large subunit">
    <location>
        <begin position="1"/>
        <end position="469"/>
    </location>
</feature>
<feature type="binding site" evidence="1">
    <location>
        <position position="347"/>
    </location>
    <ligand>
        <name>[4Fe-4S] cluster</name>
        <dbReference type="ChEBI" id="CHEBI:49883"/>
    </ligand>
</feature>
<feature type="binding site" evidence="1">
    <location>
        <position position="407"/>
    </location>
    <ligand>
        <name>[4Fe-4S] cluster</name>
        <dbReference type="ChEBI" id="CHEBI:49883"/>
    </ligand>
</feature>
<feature type="binding site" evidence="1">
    <location>
        <position position="410"/>
    </location>
    <ligand>
        <name>[4Fe-4S] cluster</name>
        <dbReference type="ChEBI" id="CHEBI:49883"/>
    </ligand>
</feature>
<proteinExistence type="inferred from homology"/>
<keyword id="KW-0004">4Fe-4S</keyword>
<keyword id="KW-0028">Amino-acid biosynthesis</keyword>
<keyword id="KW-0100">Branched-chain amino acid biosynthesis</keyword>
<keyword id="KW-0408">Iron</keyword>
<keyword id="KW-0411">Iron-sulfur</keyword>
<keyword id="KW-0432">Leucine biosynthesis</keyword>
<keyword id="KW-0456">Lyase</keyword>
<keyword id="KW-0479">Metal-binding</keyword>